<gene>
    <name evidence="1" type="primary">lipA</name>
    <name type="ordered locus">PC1_1175</name>
</gene>
<organism>
    <name type="scientific">Pectobacterium carotovorum subsp. carotovorum (strain PC1)</name>
    <dbReference type="NCBI Taxonomy" id="561230"/>
    <lineage>
        <taxon>Bacteria</taxon>
        <taxon>Pseudomonadati</taxon>
        <taxon>Pseudomonadota</taxon>
        <taxon>Gammaproteobacteria</taxon>
        <taxon>Enterobacterales</taxon>
        <taxon>Pectobacteriaceae</taxon>
        <taxon>Pectobacterium</taxon>
    </lineage>
</organism>
<protein>
    <recommendedName>
        <fullName evidence="1">Lipoyl synthase</fullName>
        <ecNumber evidence="1">2.8.1.8</ecNumber>
    </recommendedName>
    <alternativeName>
        <fullName evidence="1">Lip-syn</fullName>
        <shortName evidence="1">LS</shortName>
    </alternativeName>
    <alternativeName>
        <fullName evidence="1">Lipoate synthase</fullName>
    </alternativeName>
    <alternativeName>
        <fullName evidence="1">Lipoic acid synthase</fullName>
    </alternativeName>
    <alternativeName>
        <fullName evidence="1">Sulfur insertion protein LipA</fullName>
    </alternativeName>
</protein>
<evidence type="ECO:0000255" key="1">
    <source>
        <dbReference type="HAMAP-Rule" id="MF_00206"/>
    </source>
</evidence>
<evidence type="ECO:0000255" key="2">
    <source>
        <dbReference type="PROSITE-ProRule" id="PRU01266"/>
    </source>
</evidence>
<accession>C6DBV6</accession>
<sequence>MSKPIQIERGVKYRDADKMALIPVRTVVTERQEILRKPEWMKIKLPADSSRIQGIKAAMRKNGLHSVCEEASCPNLAECFNHGTATFMILGAICTRRCPFCDVAHGRPLTPDANEPEKLAQTIHDMGLRYVVITSVDRDDLRDGGAQHFADCISAIRRKNPNIRIETLVPDFRGRMDRALEILTATPPDVFNHNLENVPRVYRQVRPGANYEWSLKLLENFKNAHPDIPTKSGLMVGLGETNAEIVDVMRDLRRHGVTMLTLGQYLQPSRHHLPVQRYVSPDEFDEMKAEAIAMGFTHAACGPFVRSSYHADLQAKGIEVK</sequence>
<name>LIPA_PECCP</name>
<reference key="1">
    <citation type="submission" date="2009-07" db="EMBL/GenBank/DDBJ databases">
        <title>Complete sequence of Pectobacterium carotovorum subsp. carotovorum PC1.</title>
        <authorList>
            <consortium name="US DOE Joint Genome Institute"/>
            <person name="Lucas S."/>
            <person name="Copeland A."/>
            <person name="Lapidus A."/>
            <person name="Glavina del Rio T."/>
            <person name="Tice H."/>
            <person name="Bruce D."/>
            <person name="Goodwin L."/>
            <person name="Pitluck S."/>
            <person name="Munk A.C."/>
            <person name="Brettin T."/>
            <person name="Detter J.C."/>
            <person name="Han C."/>
            <person name="Tapia R."/>
            <person name="Larimer F."/>
            <person name="Land M."/>
            <person name="Hauser L."/>
            <person name="Kyrpides N."/>
            <person name="Mikhailova N."/>
            <person name="Balakrishnan V."/>
            <person name="Glasner J."/>
            <person name="Perna N.T."/>
        </authorList>
    </citation>
    <scope>NUCLEOTIDE SEQUENCE [LARGE SCALE GENOMIC DNA]</scope>
    <source>
        <strain>PC1</strain>
    </source>
</reference>
<keyword id="KW-0004">4Fe-4S</keyword>
<keyword id="KW-0963">Cytoplasm</keyword>
<keyword id="KW-0408">Iron</keyword>
<keyword id="KW-0411">Iron-sulfur</keyword>
<keyword id="KW-0479">Metal-binding</keyword>
<keyword id="KW-0949">S-adenosyl-L-methionine</keyword>
<keyword id="KW-0808">Transferase</keyword>
<feature type="chain" id="PRO_1000204153" description="Lipoyl synthase">
    <location>
        <begin position="1"/>
        <end position="321"/>
    </location>
</feature>
<feature type="domain" description="Radical SAM core" evidence="2">
    <location>
        <begin position="80"/>
        <end position="297"/>
    </location>
</feature>
<feature type="binding site" evidence="1">
    <location>
        <position position="68"/>
    </location>
    <ligand>
        <name>[4Fe-4S] cluster</name>
        <dbReference type="ChEBI" id="CHEBI:49883"/>
        <label>1</label>
    </ligand>
</feature>
<feature type="binding site" evidence="1">
    <location>
        <position position="73"/>
    </location>
    <ligand>
        <name>[4Fe-4S] cluster</name>
        <dbReference type="ChEBI" id="CHEBI:49883"/>
        <label>1</label>
    </ligand>
</feature>
<feature type="binding site" evidence="1">
    <location>
        <position position="79"/>
    </location>
    <ligand>
        <name>[4Fe-4S] cluster</name>
        <dbReference type="ChEBI" id="CHEBI:49883"/>
        <label>1</label>
    </ligand>
</feature>
<feature type="binding site" evidence="1">
    <location>
        <position position="94"/>
    </location>
    <ligand>
        <name>[4Fe-4S] cluster</name>
        <dbReference type="ChEBI" id="CHEBI:49883"/>
        <label>2</label>
        <note>4Fe-4S-S-AdoMet</note>
    </ligand>
</feature>
<feature type="binding site" evidence="1">
    <location>
        <position position="98"/>
    </location>
    <ligand>
        <name>[4Fe-4S] cluster</name>
        <dbReference type="ChEBI" id="CHEBI:49883"/>
        <label>2</label>
        <note>4Fe-4S-S-AdoMet</note>
    </ligand>
</feature>
<feature type="binding site" evidence="1">
    <location>
        <position position="101"/>
    </location>
    <ligand>
        <name>[4Fe-4S] cluster</name>
        <dbReference type="ChEBI" id="CHEBI:49883"/>
        <label>2</label>
        <note>4Fe-4S-S-AdoMet</note>
    </ligand>
</feature>
<feature type="binding site" evidence="1">
    <location>
        <position position="308"/>
    </location>
    <ligand>
        <name>[4Fe-4S] cluster</name>
        <dbReference type="ChEBI" id="CHEBI:49883"/>
        <label>1</label>
    </ligand>
</feature>
<dbReference type="EC" id="2.8.1.8" evidence="1"/>
<dbReference type="EMBL" id="CP001657">
    <property type="protein sequence ID" value="ACT12223.1"/>
    <property type="molecule type" value="Genomic_DNA"/>
</dbReference>
<dbReference type="RefSeq" id="WP_015839461.1">
    <property type="nucleotide sequence ID" value="NC_012917.1"/>
</dbReference>
<dbReference type="SMR" id="C6DBV6"/>
<dbReference type="STRING" id="561230.PC1_1175"/>
<dbReference type="KEGG" id="pct:PC1_1175"/>
<dbReference type="eggNOG" id="COG0320">
    <property type="taxonomic scope" value="Bacteria"/>
</dbReference>
<dbReference type="HOGENOM" id="CLU_033144_2_1_6"/>
<dbReference type="OrthoDB" id="9787898at2"/>
<dbReference type="UniPathway" id="UPA00538">
    <property type="reaction ID" value="UER00593"/>
</dbReference>
<dbReference type="Proteomes" id="UP000002736">
    <property type="component" value="Chromosome"/>
</dbReference>
<dbReference type="GO" id="GO:0005737">
    <property type="term" value="C:cytoplasm"/>
    <property type="evidence" value="ECO:0007669"/>
    <property type="project" value="UniProtKB-SubCell"/>
</dbReference>
<dbReference type="GO" id="GO:0051539">
    <property type="term" value="F:4 iron, 4 sulfur cluster binding"/>
    <property type="evidence" value="ECO:0007669"/>
    <property type="project" value="UniProtKB-UniRule"/>
</dbReference>
<dbReference type="GO" id="GO:0016992">
    <property type="term" value="F:lipoate synthase activity"/>
    <property type="evidence" value="ECO:0007669"/>
    <property type="project" value="UniProtKB-UniRule"/>
</dbReference>
<dbReference type="GO" id="GO:0046872">
    <property type="term" value="F:metal ion binding"/>
    <property type="evidence" value="ECO:0007669"/>
    <property type="project" value="UniProtKB-KW"/>
</dbReference>
<dbReference type="CDD" id="cd01335">
    <property type="entry name" value="Radical_SAM"/>
    <property type="match status" value="1"/>
</dbReference>
<dbReference type="FunFam" id="3.20.20.70:FF:000023">
    <property type="entry name" value="Lipoyl synthase"/>
    <property type="match status" value="1"/>
</dbReference>
<dbReference type="Gene3D" id="3.20.20.70">
    <property type="entry name" value="Aldolase class I"/>
    <property type="match status" value="1"/>
</dbReference>
<dbReference type="HAMAP" id="MF_00206">
    <property type="entry name" value="Lipoyl_synth"/>
    <property type="match status" value="1"/>
</dbReference>
<dbReference type="InterPro" id="IPR013785">
    <property type="entry name" value="Aldolase_TIM"/>
</dbReference>
<dbReference type="InterPro" id="IPR006638">
    <property type="entry name" value="Elp3/MiaA/NifB-like_rSAM"/>
</dbReference>
<dbReference type="InterPro" id="IPR031691">
    <property type="entry name" value="LIAS_N"/>
</dbReference>
<dbReference type="InterPro" id="IPR003698">
    <property type="entry name" value="Lipoyl_synth"/>
</dbReference>
<dbReference type="InterPro" id="IPR007197">
    <property type="entry name" value="rSAM"/>
</dbReference>
<dbReference type="NCBIfam" id="TIGR00510">
    <property type="entry name" value="lipA"/>
    <property type="match status" value="1"/>
</dbReference>
<dbReference type="NCBIfam" id="NF004019">
    <property type="entry name" value="PRK05481.1"/>
    <property type="match status" value="1"/>
</dbReference>
<dbReference type="NCBIfam" id="NF009544">
    <property type="entry name" value="PRK12928.1"/>
    <property type="match status" value="1"/>
</dbReference>
<dbReference type="PANTHER" id="PTHR10949">
    <property type="entry name" value="LIPOYL SYNTHASE"/>
    <property type="match status" value="1"/>
</dbReference>
<dbReference type="PANTHER" id="PTHR10949:SF0">
    <property type="entry name" value="LIPOYL SYNTHASE, MITOCHONDRIAL"/>
    <property type="match status" value="1"/>
</dbReference>
<dbReference type="Pfam" id="PF16881">
    <property type="entry name" value="LIAS_N"/>
    <property type="match status" value="1"/>
</dbReference>
<dbReference type="Pfam" id="PF04055">
    <property type="entry name" value="Radical_SAM"/>
    <property type="match status" value="1"/>
</dbReference>
<dbReference type="PIRSF" id="PIRSF005963">
    <property type="entry name" value="Lipoyl_synth"/>
    <property type="match status" value="1"/>
</dbReference>
<dbReference type="SFLD" id="SFLDF00271">
    <property type="entry name" value="lipoyl_synthase"/>
    <property type="match status" value="1"/>
</dbReference>
<dbReference type="SFLD" id="SFLDG01058">
    <property type="entry name" value="lipoyl_synthase_like"/>
    <property type="match status" value="1"/>
</dbReference>
<dbReference type="SMART" id="SM00729">
    <property type="entry name" value="Elp3"/>
    <property type="match status" value="1"/>
</dbReference>
<dbReference type="SUPFAM" id="SSF102114">
    <property type="entry name" value="Radical SAM enzymes"/>
    <property type="match status" value="1"/>
</dbReference>
<dbReference type="PROSITE" id="PS51918">
    <property type="entry name" value="RADICAL_SAM"/>
    <property type="match status" value="1"/>
</dbReference>
<comment type="function">
    <text evidence="1">Catalyzes the radical-mediated insertion of two sulfur atoms into the C-6 and C-8 positions of the octanoyl moiety bound to the lipoyl domains of lipoate-dependent enzymes, thereby converting the octanoylated domains into lipoylated derivatives.</text>
</comment>
<comment type="catalytic activity">
    <reaction evidence="1">
        <text>[[Fe-S] cluster scaffold protein carrying a second [4Fe-4S](2+) cluster] + N(6)-octanoyl-L-lysyl-[protein] + 2 oxidized [2Fe-2S]-[ferredoxin] + 2 S-adenosyl-L-methionine + 4 H(+) = [[Fe-S] cluster scaffold protein] + N(6)-[(R)-dihydrolipoyl]-L-lysyl-[protein] + 4 Fe(3+) + 2 hydrogen sulfide + 2 5'-deoxyadenosine + 2 L-methionine + 2 reduced [2Fe-2S]-[ferredoxin]</text>
        <dbReference type="Rhea" id="RHEA:16585"/>
        <dbReference type="Rhea" id="RHEA-COMP:9928"/>
        <dbReference type="Rhea" id="RHEA-COMP:10000"/>
        <dbReference type="Rhea" id="RHEA-COMP:10001"/>
        <dbReference type="Rhea" id="RHEA-COMP:10475"/>
        <dbReference type="Rhea" id="RHEA-COMP:14568"/>
        <dbReference type="Rhea" id="RHEA-COMP:14569"/>
        <dbReference type="ChEBI" id="CHEBI:15378"/>
        <dbReference type="ChEBI" id="CHEBI:17319"/>
        <dbReference type="ChEBI" id="CHEBI:29034"/>
        <dbReference type="ChEBI" id="CHEBI:29919"/>
        <dbReference type="ChEBI" id="CHEBI:33722"/>
        <dbReference type="ChEBI" id="CHEBI:33737"/>
        <dbReference type="ChEBI" id="CHEBI:33738"/>
        <dbReference type="ChEBI" id="CHEBI:57844"/>
        <dbReference type="ChEBI" id="CHEBI:59789"/>
        <dbReference type="ChEBI" id="CHEBI:78809"/>
        <dbReference type="ChEBI" id="CHEBI:83100"/>
        <dbReference type="EC" id="2.8.1.8"/>
    </reaction>
</comment>
<comment type="cofactor">
    <cofactor evidence="1">
        <name>[4Fe-4S] cluster</name>
        <dbReference type="ChEBI" id="CHEBI:49883"/>
    </cofactor>
    <text evidence="1">Binds 2 [4Fe-4S] clusters per subunit. One cluster is coordinated with 3 cysteines and an exchangeable S-adenosyl-L-methionine.</text>
</comment>
<comment type="pathway">
    <text evidence="1">Protein modification; protein lipoylation via endogenous pathway; protein N(6)-(lipoyl)lysine from octanoyl-[acyl-carrier-protein]: step 2/2.</text>
</comment>
<comment type="subcellular location">
    <subcellularLocation>
        <location evidence="1">Cytoplasm</location>
    </subcellularLocation>
</comment>
<comment type="similarity">
    <text evidence="1">Belongs to the radical SAM superfamily. Lipoyl synthase family.</text>
</comment>
<proteinExistence type="inferred from homology"/>